<feature type="chain" id="PRO_0000138692" description="DNA double-strand break repair protein Mre11">
    <location>
        <begin position="1"/>
        <end position="372"/>
    </location>
</feature>
<feature type="active site" description="Proton donor" evidence="1">
    <location>
        <position position="85"/>
    </location>
</feature>
<feature type="binding site" evidence="1">
    <location>
        <position position="8"/>
    </location>
    <ligand>
        <name>Mn(2+)</name>
        <dbReference type="ChEBI" id="CHEBI:29035"/>
        <label>1</label>
    </ligand>
</feature>
<feature type="binding site" evidence="1">
    <location>
        <position position="10"/>
    </location>
    <ligand>
        <name>Mn(2+)</name>
        <dbReference type="ChEBI" id="CHEBI:29035"/>
        <label>1</label>
    </ligand>
</feature>
<feature type="binding site" evidence="1">
    <location>
        <position position="49"/>
    </location>
    <ligand>
        <name>Mn(2+)</name>
        <dbReference type="ChEBI" id="CHEBI:29035"/>
        <label>1</label>
    </ligand>
</feature>
<feature type="binding site" evidence="1">
    <location>
        <position position="49"/>
    </location>
    <ligand>
        <name>Mn(2+)</name>
        <dbReference type="ChEBI" id="CHEBI:29035"/>
        <label>2</label>
    </ligand>
</feature>
<feature type="binding site" evidence="1">
    <location>
        <position position="84"/>
    </location>
    <ligand>
        <name>Mn(2+)</name>
        <dbReference type="ChEBI" id="CHEBI:29035"/>
        <label>2</label>
    </ligand>
</feature>
<feature type="binding site" evidence="1">
    <location>
        <position position="161"/>
    </location>
    <ligand>
        <name>Mn(2+)</name>
        <dbReference type="ChEBI" id="CHEBI:29035"/>
        <label>2</label>
    </ligand>
</feature>
<feature type="binding site" evidence="1">
    <location>
        <position position="190"/>
    </location>
    <ligand>
        <name>Mn(2+)</name>
        <dbReference type="ChEBI" id="CHEBI:29035"/>
        <label>2</label>
    </ligand>
</feature>
<feature type="binding site" evidence="1">
    <location>
        <position position="192"/>
    </location>
    <ligand>
        <name>Mn(2+)</name>
        <dbReference type="ChEBI" id="CHEBI:29035"/>
        <label>1</label>
    </ligand>
</feature>
<dbReference type="EC" id="3.1.-.-" evidence="1"/>
<dbReference type="EMBL" id="BX950229">
    <property type="protein sequence ID" value="CAF30896.1"/>
    <property type="molecule type" value="Genomic_DNA"/>
</dbReference>
<dbReference type="RefSeq" id="WP_011171284.1">
    <property type="nucleotide sequence ID" value="NC_005791.1"/>
</dbReference>
<dbReference type="SMR" id="P62131"/>
<dbReference type="STRING" id="267377.MMP1340"/>
<dbReference type="EnsemblBacteria" id="CAF30896">
    <property type="protein sequence ID" value="CAF30896"/>
    <property type="gene ID" value="MMP1340"/>
</dbReference>
<dbReference type="GeneID" id="2761216"/>
<dbReference type="KEGG" id="mmp:MMP1340"/>
<dbReference type="PATRIC" id="fig|267377.15.peg.1375"/>
<dbReference type="eggNOG" id="arCOG00397">
    <property type="taxonomic scope" value="Archaea"/>
</dbReference>
<dbReference type="HOGENOM" id="CLU_026621_5_2_2"/>
<dbReference type="OrthoDB" id="11638at2157"/>
<dbReference type="Proteomes" id="UP000000590">
    <property type="component" value="Chromosome"/>
</dbReference>
<dbReference type="GO" id="GO:0008408">
    <property type="term" value="F:3'-5' exonuclease activity"/>
    <property type="evidence" value="ECO:0007669"/>
    <property type="project" value="UniProtKB-UniRule"/>
</dbReference>
<dbReference type="GO" id="GO:0045027">
    <property type="term" value="F:DNA end binding"/>
    <property type="evidence" value="ECO:0007669"/>
    <property type="project" value="UniProtKB-UniRule"/>
</dbReference>
<dbReference type="GO" id="GO:0004519">
    <property type="term" value="F:endonuclease activity"/>
    <property type="evidence" value="ECO:0007669"/>
    <property type="project" value="UniProtKB-UniRule"/>
</dbReference>
<dbReference type="GO" id="GO:0030145">
    <property type="term" value="F:manganese ion binding"/>
    <property type="evidence" value="ECO:0007669"/>
    <property type="project" value="UniProtKB-UniRule"/>
</dbReference>
<dbReference type="GO" id="GO:0000403">
    <property type="term" value="F:Y-form DNA binding"/>
    <property type="evidence" value="ECO:0007669"/>
    <property type="project" value="UniProtKB-UniRule"/>
</dbReference>
<dbReference type="GO" id="GO:0006302">
    <property type="term" value="P:double-strand break repair"/>
    <property type="evidence" value="ECO:0007669"/>
    <property type="project" value="UniProtKB-UniRule"/>
</dbReference>
<dbReference type="CDD" id="cd00840">
    <property type="entry name" value="MPP_Mre11_N"/>
    <property type="match status" value="1"/>
</dbReference>
<dbReference type="Gene3D" id="3.60.21.10">
    <property type="match status" value="1"/>
</dbReference>
<dbReference type="Gene3D" id="6.10.10.50">
    <property type="entry name" value="Mre11, C-terminal domain-like"/>
    <property type="match status" value="1"/>
</dbReference>
<dbReference type="HAMAP" id="MF_02044">
    <property type="entry name" value="Mre11"/>
    <property type="match status" value="1"/>
</dbReference>
<dbReference type="InterPro" id="IPR004843">
    <property type="entry name" value="Calcineurin-like_PHP_ApaH"/>
</dbReference>
<dbReference type="InterPro" id="IPR050535">
    <property type="entry name" value="DNA_Repair-Maintenance_Comp"/>
</dbReference>
<dbReference type="InterPro" id="IPR029052">
    <property type="entry name" value="Metallo-depent_PP-like"/>
</dbReference>
<dbReference type="InterPro" id="IPR032885">
    <property type="entry name" value="Mre11_archaea-type"/>
</dbReference>
<dbReference type="InterPro" id="IPR041796">
    <property type="entry name" value="Mre11_N"/>
</dbReference>
<dbReference type="PANTHER" id="PTHR30337">
    <property type="entry name" value="COMPONENT OF ATP-DEPENDENT DSDNA EXONUCLEASE"/>
    <property type="match status" value="1"/>
</dbReference>
<dbReference type="PANTHER" id="PTHR30337:SF0">
    <property type="entry name" value="NUCLEASE SBCCD SUBUNIT D"/>
    <property type="match status" value="1"/>
</dbReference>
<dbReference type="Pfam" id="PF00149">
    <property type="entry name" value="Metallophos"/>
    <property type="match status" value="1"/>
</dbReference>
<dbReference type="SUPFAM" id="SSF56300">
    <property type="entry name" value="Metallo-dependent phosphatases"/>
    <property type="match status" value="1"/>
</dbReference>
<protein>
    <recommendedName>
        <fullName evidence="1">DNA double-strand break repair protein Mre11</fullName>
        <ecNumber evidence="1">3.1.-.-</ecNumber>
    </recommendedName>
</protein>
<organism>
    <name type="scientific">Methanococcus maripaludis (strain DSM 14266 / JCM 13030 / NBRC 101832 / S2 / LL)</name>
    <dbReference type="NCBI Taxonomy" id="267377"/>
    <lineage>
        <taxon>Archaea</taxon>
        <taxon>Methanobacteriati</taxon>
        <taxon>Methanobacteriota</taxon>
        <taxon>Methanomada group</taxon>
        <taxon>Methanococci</taxon>
        <taxon>Methanococcales</taxon>
        <taxon>Methanococcaceae</taxon>
        <taxon>Methanococcus</taxon>
    </lineage>
</organism>
<accession>P62131</accession>
<proteinExistence type="inferred from homology"/>
<gene>
    <name evidence="1" type="primary">mre11</name>
    <name type="ordered locus">MMP1340</name>
</gene>
<reference key="1">
    <citation type="journal article" date="2004" name="J. Bacteriol.">
        <title>Complete genome sequence of the genetically tractable hydrogenotrophic methanogen Methanococcus maripaludis.</title>
        <authorList>
            <person name="Hendrickson E.L."/>
            <person name="Kaul R."/>
            <person name="Zhou Y."/>
            <person name="Bovee D."/>
            <person name="Chapman P."/>
            <person name="Chung J."/>
            <person name="Conway de Macario E."/>
            <person name="Dodsworth J.A."/>
            <person name="Gillett W."/>
            <person name="Graham D.E."/>
            <person name="Hackett M."/>
            <person name="Haydock A.K."/>
            <person name="Kang A."/>
            <person name="Land M.L."/>
            <person name="Levy R."/>
            <person name="Lie T.J."/>
            <person name="Major T.A."/>
            <person name="Moore B.C."/>
            <person name="Porat I."/>
            <person name="Palmeiri A."/>
            <person name="Rouse G."/>
            <person name="Saenphimmachak C."/>
            <person name="Soell D."/>
            <person name="Van Dien S."/>
            <person name="Wang T."/>
            <person name="Whitman W.B."/>
            <person name="Xia Q."/>
            <person name="Zhang Y."/>
            <person name="Larimer F.W."/>
            <person name="Olson M.V."/>
            <person name="Leigh J.A."/>
        </authorList>
    </citation>
    <scope>NUCLEOTIDE SEQUENCE [LARGE SCALE GENOMIC DNA]</scope>
    <source>
        <strain>DSM 14266 / JCM 13030 / NBRC 101832 / S2 / LL</strain>
    </source>
</reference>
<sequence>MQFVHMADNHLGYRQYNLDERENDIYESFLECIDKIIEIRPDFVIHSGDLFESPQPPVNAIRCAMEGLLKLKEKNIPIYLIHGNHDIPKSQQKGKPFGLLKKILGNSLLTFGKNKSHVFNNEVFIGGIEYVSQNKIPKTYEDLEKINSDSKNYKKKILLFHQSVNPFIPQSFEMQVTDFPDDFNYIAGGHIHQRALKPINDGNSVFSYAGSTDIMSVSEVKDYKKNGKGFYLGDLSGDFDINSIQKIDVECRNFLIDKKIKNENDYKKTVEELQNLQSEKKKPILYCDIVENLFNSFNDEIANLTLYKRISRIDENLEESLIINESSIEEIFQEYIKNKEMDVNFVYGLYKKLLENDEDSLLYVNDYFKGNY</sequence>
<comment type="function">
    <text evidence="1">Part of the Rad50/Mre11 complex, which is involved in the early steps of DNA double-strand break (DSB) repair. The complex may facilitate opening of the processed DNA ends to aid in the recruitment of HerA and NurA. Mre11 binds to DSB ends and has both double-stranded 3'-5' exonuclease activity and single-stranded endonuclease activity.</text>
</comment>
<comment type="cofactor">
    <cofactor evidence="1">
        <name>Mn(2+)</name>
        <dbReference type="ChEBI" id="CHEBI:29035"/>
    </cofactor>
    <text evidence="1">Binds 2 manganese ions per subunit.</text>
</comment>
<comment type="activity regulation">
    <text evidence="1">Nuclease activity is regulated by Rad50.</text>
</comment>
<comment type="subunit">
    <text evidence="1">Homodimer. Forms a heterotetramer composed of two Mre11 subunits and two Rad50 subunits.</text>
</comment>
<comment type="similarity">
    <text evidence="1">Belongs to the MRE11/RAD32 family.</text>
</comment>
<keyword id="KW-0227">DNA damage</keyword>
<keyword id="KW-0234">DNA repair</keyword>
<keyword id="KW-0255">Endonuclease</keyword>
<keyword id="KW-0269">Exonuclease</keyword>
<keyword id="KW-0378">Hydrolase</keyword>
<keyword id="KW-0464">Manganese</keyword>
<keyword id="KW-0479">Metal-binding</keyword>
<keyword id="KW-0540">Nuclease</keyword>
<keyword id="KW-1185">Reference proteome</keyword>
<evidence type="ECO:0000255" key="1">
    <source>
        <dbReference type="HAMAP-Rule" id="MF_02044"/>
    </source>
</evidence>
<name>MRE11_METMP</name>